<evidence type="ECO:0000255" key="1">
    <source>
        <dbReference type="HAMAP-Rule" id="MF_00011"/>
    </source>
</evidence>
<sequence length="437" mass="47813">MANVVVIGAQWGDEGKGKITDLLSRSADVVVRYQGGVNAGHTIVVDDQVLKLHLIPSGILYPETICLIGSGTVIDPKVMLKELDMLLENSIDISGLQLASTAHVTMPYHRLLDEAMEQQRGDQRIGTTGRGIGPTYADKSQRNGIRVLDLLDSQRLRERLRGPLQEKNRLLEQIYGVAPLDSEQVIEEYLGYGQRLAPHVVDCIQTIHQAARSRKNILFEGAQGTLLDLDHGTYPYVTSSNPISGGACIGAGVGPTLIDRVIGVAKAYTTRVGEGPFPTELEGSINEQLCDRGGEFGTTTGRRRRCGWFDGVIGRYAVAVNGLDCLAITKLDVLDELDEIRVCVAYELNGERIEHFPSSAEDFARCHPIFETLPGWQCSTADCRRLEDLPTTAMDYLRFLADLMEVPIAIVSLGANRDQTIVVEDPIHGPKRALLSA</sequence>
<name>PURA_PROMM</name>
<keyword id="KW-0963">Cytoplasm</keyword>
<keyword id="KW-0342">GTP-binding</keyword>
<keyword id="KW-0436">Ligase</keyword>
<keyword id="KW-0460">Magnesium</keyword>
<keyword id="KW-0479">Metal-binding</keyword>
<keyword id="KW-0547">Nucleotide-binding</keyword>
<keyword id="KW-0658">Purine biosynthesis</keyword>
<keyword id="KW-1185">Reference proteome</keyword>
<comment type="function">
    <text evidence="1">Plays an important role in the de novo pathway of purine nucleotide biosynthesis. Catalyzes the first committed step in the biosynthesis of AMP from IMP.</text>
</comment>
<comment type="catalytic activity">
    <reaction evidence="1">
        <text>IMP + L-aspartate + GTP = N(6)-(1,2-dicarboxyethyl)-AMP + GDP + phosphate + 2 H(+)</text>
        <dbReference type="Rhea" id="RHEA:15753"/>
        <dbReference type="ChEBI" id="CHEBI:15378"/>
        <dbReference type="ChEBI" id="CHEBI:29991"/>
        <dbReference type="ChEBI" id="CHEBI:37565"/>
        <dbReference type="ChEBI" id="CHEBI:43474"/>
        <dbReference type="ChEBI" id="CHEBI:57567"/>
        <dbReference type="ChEBI" id="CHEBI:58053"/>
        <dbReference type="ChEBI" id="CHEBI:58189"/>
        <dbReference type="EC" id="6.3.4.4"/>
    </reaction>
</comment>
<comment type="cofactor">
    <cofactor evidence="1">
        <name>Mg(2+)</name>
        <dbReference type="ChEBI" id="CHEBI:18420"/>
    </cofactor>
    <text evidence="1">Binds 1 Mg(2+) ion per subunit.</text>
</comment>
<comment type="pathway">
    <text evidence="1">Purine metabolism; AMP biosynthesis via de novo pathway; AMP from IMP: step 1/2.</text>
</comment>
<comment type="subunit">
    <text evidence="1">Homodimer.</text>
</comment>
<comment type="subcellular location">
    <subcellularLocation>
        <location evidence="1">Cytoplasm</location>
    </subcellularLocation>
</comment>
<comment type="similarity">
    <text evidence="1">Belongs to the adenylosuccinate synthetase family.</text>
</comment>
<reference key="1">
    <citation type="journal article" date="2003" name="Nature">
        <title>Genome divergence in two Prochlorococcus ecotypes reflects oceanic niche differentiation.</title>
        <authorList>
            <person name="Rocap G."/>
            <person name="Larimer F.W."/>
            <person name="Lamerdin J.E."/>
            <person name="Malfatti S."/>
            <person name="Chain P."/>
            <person name="Ahlgren N.A."/>
            <person name="Arellano A."/>
            <person name="Coleman M."/>
            <person name="Hauser L."/>
            <person name="Hess W.R."/>
            <person name="Johnson Z.I."/>
            <person name="Land M.L."/>
            <person name="Lindell D."/>
            <person name="Post A.F."/>
            <person name="Regala W."/>
            <person name="Shah M."/>
            <person name="Shaw S.L."/>
            <person name="Steglich C."/>
            <person name="Sullivan M.B."/>
            <person name="Ting C.S."/>
            <person name="Tolonen A."/>
            <person name="Webb E.A."/>
            <person name="Zinser E.R."/>
            <person name="Chisholm S.W."/>
        </authorList>
    </citation>
    <scope>NUCLEOTIDE SEQUENCE [LARGE SCALE GENOMIC DNA]</scope>
    <source>
        <strain>MIT 9313</strain>
    </source>
</reference>
<dbReference type="EC" id="6.3.4.4" evidence="1"/>
<dbReference type="EMBL" id="BX548175">
    <property type="protein sequence ID" value="CAE21436.1"/>
    <property type="molecule type" value="Genomic_DNA"/>
</dbReference>
<dbReference type="SMR" id="Q7V6A8"/>
<dbReference type="KEGG" id="pmt:PMT_1261"/>
<dbReference type="eggNOG" id="COG0104">
    <property type="taxonomic scope" value="Bacteria"/>
</dbReference>
<dbReference type="HOGENOM" id="CLU_029848_0_0_3"/>
<dbReference type="OrthoDB" id="9807553at2"/>
<dbReference type="UniPathway" id="UPA00075">
    <property type="reaction ID" value="UER00335"/>
</dbReference>
<dbReference type="Proteomes" id="UP000001423">
    <property type="component" value="Chromosome"/>
</dbReference>
<dbReference type="GO" id="GO:0005737">
    <property type="term" value="C:cytoplasm"/>
    <property type="evidence" value="ECO:0007669"/>
    <property type="project" value="UniProtKB-SubCell"/>
</dbReference>
<dbReference type="GO" id="GO:0004019">
    <property type="term" value="F:adenylosuccinate synthase activity"/>
    <property type="evidence" value="ECO:0007669"/>
    <property type="project" value="UniProtKB-UniRule"/>
</dbReference>
<dbReference type="GO" id="GO:0005525">
    <property type="term" value="F:GTP binding"/>
    <property type="evidence" value="ECO:0007669"/>
    <property type="project" value="UniProtKB-UniRule"/>
</dbReference>
<dbReference type="GO" id="GO:0000287">
    <property type="term" value="F:magnesium ion binding"/>
    <property type="evidence" value="ECO:0007669"/>
    <property type="project" value="UniProtKB-UniRule"/>
</dbReference>
<dbReference type="GO" id="GO:0044208">
    <property type="term" value="P:'de novo' AMP biosynthetic process"/>
    <property type="evidence" value="ECO:0007669"/>
    <property type="project" value="UniProtKB-UniRule"/>
</dbReference>
<dbReference type="GO" id="GO:0046040">
    <property type="term" value="P:IMP metabolic process"/>
    <property type="evidence" value="ECO:0007669"/>
    <property type="project" value="TreeGrafter"/>
</dbReference>
<dbReference type="CDD" id="cd03108">
    <property type="entry name" value="AdSS"/>
    <property type="match status" value="1"/>
</dbReference>
<dbReference type="FunFam" id="1.10.300.10:FF:000001">
    <property type="entry name" value="Adenylosuccinate synthetase"/>
    <property type="match status" value="1"/>
</dbReference>
<dbReference type="FunFam" id="3.90.170.10:FF:000001">
    <property type="entry name" value="Adenylosuccinate synthetase"/>
    <property type="match status" value="1"/>
</dbReference>
<dbReference type="Gene3D" id="3.40.440.10">
    <property type="entry name" value="Adenylosuccinate Synthetase, subunit A, domain 1"/>
    <property type="match status" value="1"/>
</dbReference>
<dbReference type="Gene3D" id="1.10.300.10">
    <property type="entry name" value="Adenylosuccinate Synthetase, subunit A, domain 2"/>
    <property type="match status" value="1"/>
</dbReference>
<dbReference type="Gene3D" id="3.90.170.10">
    <property type="entry name" value="Adenylosuccinate Synthetase, subunit A, domain 3"/>
    <property type="match status" value="1"/>
</dbReference>
<dbReference type="HAMAP" id="MF_00011">
    <property type="entry name" value="Adenylosucc_synth"/>
    <property type="match status" value="1"/>
</dbReference>
<dbReference type="InterPro" id="IPR018220">
    <property type="entry name" value="Adenylosuccin_syn_GTP-bd"/>
</dbReference>
<dbReference type="InterPro" id="IPR033128">
    <property type="entry name" value="Adenylosuccin_syn_Lys_AS"/>
</dbReference>
<dbReference type="InterPro" id="IPR042109">
    <property type="entry name" value="Adenylosuccinate_synth_dom1"/>
</dbReference>
<dbReference type="InterPro" id="IPR042110">
    <property type="entry name" value="Adenylosuccinate_synth_dom2"/>
</dbReference>
<dbReference type="InterPro" id="IPR042111">
    <property type="entry name" value="Adenylosuccinate_synth_dom3"/>
</dbReference>
<dbReference type="InterPro" id="IPR001114">
    <property type="entry name" value="Adenylosuccinate_synthetase"/>
</dbReference>
<dbReference type="InterPro" id="IPR027417">
    <property type="entry name" value="P-loop_NTPase"/>
</dbReference>
<dbReference type="NCBIfam" id="NF002223">
    <property type="entry name" value="PRK01117.1"/>
    <property type="match status" value="1"/>
</dbReference>
<dbReference type="NCBIfam" id="TIGR00184">
    <property type="entry name" value="purA"/>
    <property type="match status" value="1"/>
</dbReference>
<dbReference type="PANTHER" id="PTHR11846">
    <property type="entry name" value="ADENYLOSUCCINATE SYNTHETASE"/>
    <property type="match status" value="1"/>
</dbReference>
<dbReference type="PANTHER" id="PTHR11846:SF0">
    <property type="entry name" value="ADENYLOSUCCINATE SYNTHETASE"/>
    <property type="match status" value="1"/>
</dbReference>
<dbReference type="Pfam" id="PF00709">
    <property type="entry name" value="Adenylsucc_synt"/>
    <property type="match status" value="1"/>
</dbReference>
<dbReference type="SMART" id="SM00788">
    <property type="entry name" value="Adenylsucc_synt"/>
    <property type="match status" value="1"/>
</dbReference>
<dbReference type="SUPFAM" id="SSF52540">
    <property type="entry name" value="P-loop containing nucleoside triphosphate hydrolases"/>
    <property type="match status" value="1"/>
</dbReference>
<dbReference type="PROSITE" id="PS01266">
    <property type="entry name" value="ADENYLOSUCCIN_SYN_1"/>
    <property type="match status" value="1"/>
</dbReference>
<dbReference type="PROSITE" id="PS00513">
    <property type="entry name" value="ADENYLOSUCCIN_SYN_2"/>
    <property type="match status" value="1"/>
</dbReference>
<accession>Q7V6A8</accession>
<feature type="chain" id="PRO_0000095211" description="Adenylosuccinate synthetase">
    <location>
        <begin position="1"/>
        <end position="437"/>
    </location>
</feature>
<feature type="active site" description="Proton acceptor" evidence="1">
    <location>
        <position position="13"/>
    </location>
</feature>
<feature type="active site" description="Proton donor" evidence="1">
    <location>
        <position position="41"/>
    </location>
</feature>
<feature type="binding site" evidence="1">
    <location>
        <begin position="12"/>
        <end position="18"/>
    </location>
    <ligand>
        <name>GTP</name>
        <dbReference type="ChEBI" id="CHEBI:37565"/>
    </ligand>
</feature>
<feature type="binding site" description="in other chain" evidence="1">
    <location>
        <begin position="13"/>
        <end position="16"/>
    </location>
    <ligand>
        <name>IMP</name>
        <dbReference type="ChEBI" id="CHEBI:58053"/>
        <note>ligand shared between dimeric partners</note>
    </ligand>
</feature>
<feature type="binding site" evidence="1">
    <location>
        <position position="13"/>
    </location>
    <ligand>
        <name>Mg(2+)</name>
        <dbReference type="ChEBI" id="CHEBI:18420"/>
    </ligand>
</feature>
<feature type="binding site" description="in other chain" evidence="1">
    <location>
        <begin position="38"/>
        <end position="41"/>
    </location>
    <ligand>
        <name>IMP</name>
        <dbReference type="ChEBI" id="CHEBI:58053"/>
        <note>ligand shared between dimeric partners</note>
    </ligand>
</feature>
<feature type="binding site" evidence="1">
    <location>
        <begin position="40"/>
        <end position="42"/>
    </location>
    <ligand>
        <name>GTP</name>
        <dbReference type="ChEBI" id="CHEBI:37565"/>
    </ligand>
</feature>
<feature type="binding site" evidence="1">
    <location>
        <position position="40"/>
    </location>
    <ligand>
        <name>Mg(2+)</name>
        <dbReference type="ChEBI" id="CHEBI:18420"/>
    </ligand>
</feature>
<feature type="binding site" description="in other chain" evidence="1">
    <location>
        <position position="128"/>
    </location>
    <ligand>
        <name>IMP</name>
        <dbReference type="ChEBI" id="CHEBI:58053"/>
        <note>ligand shared between dimeric partners</note>
    </ligand>
</feature>
<feature type="binding site" evidence="1">
    <location>
        <position position="142"/>
    </location>
    <ligand>
        <name>IMP</name>
        <dbReference type="ChEBI" id="CHEBI:58053"/>
        <note>ligand shared between dimeric partners</note>
    </ligand>
</feature>
<feature type="binding site" description="in other chain" evidence="1">
    <location>
        <position position="223"/>
    </location>
    <ligand>
        <name>IMP</name>
        <dbReference type="ChEBI" id="CHEBI:58053"/>
        <note>ligand shared between dimeric partners</note>
    </ligand>
</feature>
<feature type="binding site" description="in other chain" evidence="1">
    <location>
        <position position="238"/>
    </location>
    <ligand>
        <name>IMP</name>
        <dbReference type="ChEBI" id="CHEBI:58053"/>
        <note>ligand shared between dimeric partners</note>
    </ligand>
</feature>
<feature type="binding site" evidence="1">
    <location>
        <begin position="298"/>
        <end position="304"/>
    </location>
    <ligand>
        <name>substrate</name>
    </ligand>
</feature>
<feature type="binding site" description="in other chain" evidence="1">
    <location>
        <position position="302"/>
    </location>
    <ligand>
        <name>IMP</name>
        <dbReference type="ChEBI" id="CHEBI:58053"/>
        <note>ligand shared between dimeric partners</note>
    </ligand>
</feature>
<feature type="binding site" evidence="1">
    <location>
        <position position="304"/>
    </location>
    <ligand>
        <name>GTP</name>
        <dbReference type="ChEBI" id="CHEBI:37565"/>
    </ligand>
</feature>
<feature type="binding site" evidence="1">
    <location>
        <begin position="330"/>
        <end position="332"/>
    </location>
    <ligand>
        <name>GTP</name>
        <dbReference type="ChEBI" id="CHEBI:37565"/>
    </ligand>
</feature>
<feature type="binding site" evidence="1">
    <location>
        <begin position="412"/>
        <end position="414"/>
    </location>
    <ligand>
        <name>GTP</name>
        <dbReference type="ChEBI" id="CHEBI:37565"/>
    </ligand>
</feature>
<protein>
    <recommendedName>
        <fullName evidence="1">Adenylosuccinate synthetase</fullName>
        <shortName evidence="1">AMPSase</shortName>
        <shortName evidence="1">AdSS</shortName>
        <ecNumber evidence="1">6.3.4.4</ecNumber>
    </recommendedName>
    <alternativeName>
        <fullName evidence="1">IMP--aspartate ligase</fullName>
    </alternativeName>
</protein>
<organism>
    <name type="scientific">Prochlorococcus marinus (strain MIT 9313)</name>
    <dbReference type="NCBI Taxonomy" id="74547"/>
    <lineage>
        <taxon>Bacteria</taxon>
        <taxon>Bacillati</taxon>
        <taxon>Cyanobacteriota</taxon>
        <taxon>Cyanophyceae</taxon>
        <taxon>Synechococcales</taxon>
        <taxon>Prochlorococcaceae</taxon>
        <taxon>Prochlorococcus</taxon>
    </lineage>
</organism>
<gene>
    <name evidence="1" type="primary">purA</name>
    <name type="synonym">adeK</name>
    <name type="ordered locus">PMT_1261</name>
</gene>
<proteinExistence type="inferred from homology"/>